<reference key="1">
    <citation type="journal article" date="2000" name="Nature">
        <title>Complete genome sequence of Pseudomonas aeruginosa PAO1, an opportunistic pathogen.</title>
        <authorList>
            <person name="Stover C.K."/>
            <person name="Pham X.-Q.T."/>
            <person name="Erwin A.L."/>
            <person name="Mizoguchi S.D."/>
            <person name="Warrener P."/>
            <person name="Hickey M.J."/>
            <person name="Brinkman F.S.L."/>
            <person name="Hufnagle W.O."/>
            <person name="Kowalik D.J."/>
            <person name="Lagrou M."/>
            <person name="Garber R.L."/>
            <person name="Goltry L."/>
            <person name="Tolentino E."/>
            <person name="Westbrock-Wadman S."/>
            <person name="Yuan Y."/>
            <person name="Brody L.L."/>
            <person name="Coulter S.N."/>
            <person name="Folger K.R."/>
            <person name="Kas A."/>
            <person name="Larbig K."/>
            <person name="Lim R.M."/>
            <person name="Smith K.A."/>
            <person name="Spencer D.H."/>
            <person name="Wong G.K.-S."/>
            <person name="Wu Z."/>
            <person name="Paulsen I.T."/>
            <person name="Reizer J."/>
            <person name="Saier M.H. Jr."/>
            <person name="Hancock R.E.W."/>
            <person name="Lory S."/>
            <person name="Olson M.V."/>
        </authorList>
    </citation>
    <scope>NUCLEOTIDE SEQUENCE [LARGE SCALE GENOMIC DNA]</scope>
    <source>
        <strain>ATCC 15692 / DSM 22644 / CIP 104116 / JCM 14847 / LMG 12228 / 1C / PRS 101 / PAO1</strain>
    </source>
</reference>
<reference key="2">
    <citation type="journal article" date="1996" name="Infect. Immun.">
        <title>Cloning and characterization of Pseudomonas aeruginosa fliF, necessary for flagellar assembly and bacterial adherence to mucin.</title>
        <authorList>
            <person name="Arora S.K."/>
            <person name="Ritchings B.W."/>
            <person name="Almira E.C."/>
            <person name="Lory S."/>
            <person name="Ramphal R."/>
        </authorList>
    </citation>
    <scope>NUCLEOTIDE SEQUENCE [GENOMIC DNA] OF 1-228</scope>
    <source>
        <strain>PAK</strain>
    </source>
</reference>
<organism>
    <name type="scientific">Pseudomonas aeruginosa (strain ATCC 15692 / DSM 22644 / CIP 104116 / JCM 14847 / LMG 12228 / 1C / PRS 101 / PAO1)</name>
    <dbReference type="NCBI Taxonomy" id="208964"/>
    <lineage>
        <taxon>Bacteria</taxon>
        <taxon>Pseudomonadati</taxon>
        <taxon>Pseudomonadota</taxon>
        <taxon>Gammaproteobacteria</taxon>
        <taxon>Pseudomonadales</taxon>
        <taxon>Pseudomonadaceae</taxon>
        <taxon>Pseudomonas</taxon>
    </lineage>
</organism>
<comment type="function">
    <text evidence="1">FliG is one of three proteins (FliG, FliN, FliM) that forms the rotor-mounted switch complex (C ring), located at the base of the basal body. This complex interacts with the CheY and CheZ chemotaxis proteins, in addition to contacting components of the motor that determine the direction of flagellar rotation (By similarity).</text>
</comment>
<comment type="subcellular location">
    <subcellularLocation>
        <location evidence="2">Cell inner membrane</location>
        <topology evidence="2">Peripheral membrane protein</topology>
        <orientation evidence="2">Cytoplasmic side</orientation>
    </subcellularLocation>
    <subcellularLocation>
        <location evidence="1">Bacterial flagellum basal body</location>
    </subcellularLocation>
</comment>
<comment type="similarity">
    <text evidence="2">Belongs to the FliG family.</text>
</comment>
<evidence type="ECO:0000250" key="1"/>
<evidence type="ECO:0000305" key="2"/>
<name>FLIG_PSEAE</name>
<gene>
    <name type="primary">fliG</name>
    <name type="ordered locus">PA1102</name>
</gene>
<dbReference type="EMBL" id="AE004091">
    <property type="protein sequence ID" value="AAG04491.1"/>
    <property type="molecule type" value="Genomic_DNA"/>
</dbReference>
<dbReference type="EMBL" id="L43507">
    <property type="protein sequence ID" value="AAB06802.1"/>
    <property type="molecule type" value="Genomic_DNA"/>
</dbReference>
<dbReference type="PIR" id="G83508">
    <property type="entry name" value="G83508"/>
</dbReference>
<dbReference type="RefSeq" id="NP_249793.1">
    <property type="nucleotide sequence ID" value="NC_002516.2"/>
</dbReference>
<dbReference type="RefSeq" id="WP_003082212.1">
    <property type="nucleotide sequence ID" value="NZ_QZGE01000006.1"/>
</dbReference>
<dbReference type="SMR" id="Q51464"/>
<dbReference type="FunCoup" id="Q51464">
    <property type="interactions" value="98"/>
</dbReference>
<dbReference type="STRING" id="208964.PA1102"/>
<dbReference type="PaxDb" id="208964-PA1102"/>
<dbReference type="GeneID" id="882074"/>
<dbReference type="KEGG" id="pae:PA1102"/>
<dbReference type="PATRIC" id="fig|208964.12.peg.1141"/>
<dbReference type="PseudoCAP" id="PA1102"/>
<dbReference type="HOGENOM" id="CLU_047835_2_0_6"/>
<dbReference type="InParanoid" id="Q51464"/>
<dbReference type="OrthoDB" id="9780302at2"/>
<dbReference type="PhylomeDB" id="Q51464"/>
<dbReference type="BioCyc" id="PAER208964:G1FZ6-1125-MONOMER"/>
<dbReference type="Proteomes" id="UP000002438">
    <property type="component" value="Chromosome"/>
</dbReference>
<dbReference type="GO" id="GO:0009425">
    <property type="term" value="C:bacterial-type flagellum basal body"/>
    <property type="evidence" value="ECO:0007669"/>
    <property type="project" value="UniProtKB-SubCell"/>
</dbReference>
<dbReference type="GO" id="GO:0005886">
    <property type="term" value="C:plasma membrane"/>
    <property type="evidence" value="ECO:0007669"/>
    <property type="project" value="UniProtKB-SubCell"/>
</dbReference>
<dbReference type="GO" id="GO:0003774">
    <property type="term" value="F:cytoskeletal motor activity"/>
    <property type="evidence" value="ECO:0007669"/>
    <property type="project" value="InterPro"/>
</dbReference>
<dbReference type="GO" id="GO:0071973">
    <property type="term" value="P:bacterial-type flagellum-dependent cell motility"/>
    <property type="evidence" value="ECO:0000318"/>
    <property type="project" value="GO_Central"/>
</dbReference>
<dbReference type="GO" id="GO:0006935">
    <property type="term" value="P:chemotaxis"/>
    <property type="evidence" value="ECO:0007669"/>
    <property type="project" value="UniProtKB-KW"/>
</dbReference>
<dbReference type="FunFam" id="1.10.220.30:FF:000001">
    <property type="entry name" value="Flagellar motor switch protein FliG"/>
    <property type="match status" value="1"/>
</dbReference>
<dbReference type="FunFam" id="1.10.220.30:FF:000004">
    <property type="entry name" value="Flagellar motor switch protein FliG"/>
    <property type="match status" value="1"/>
</dbReference>
<dbReference type="FunFam" id="1.10.220.30:FF:000007">
    <property type="entry name" value="Flagellar motor switch protein FliG"/>
    <property type="match status" value="1"/>
</dbReference>
<dbReference type="Gene3D" id="1.10.220.30">
    <property type="match status" value="3"/>
</dbReference>
<dbReference type="InterPro" id="IPR000090">
    <property type="entry name" value="Flg_Motor_Flig"/>
</dbReference>
<dbReference type="InterPro" id="IPR023087">
    <property type="entry name" value="Flg_Motor_Flig_C"/>
</dbReference>
<dbReference type="InterPro" id="IPR011002">
    <property type="entry name" value="FliG_a-hlx"/>
</dbReference>
<dbReference type="InterPro" id="IPR032779">
    <property type="entry name" value="FliG_M"/>
</dbReference>
<dbReference type="InterPro" id="IPR028263">
    <property type="entry name" value="FliG_N"/>
</dbReference>
<dbReference type="NCBIfam" id="TIGR00207">
    <property type="entry name" value="fliG"/>
    <property type="match status" value="1"/>
</dbReference>
<dbReference type="PANTHER" id="PTHR30534">
    <property type="entry name" value="FLAGELLAR MOTOR SWITCH PROTEIN FLIG"/>
    <property type="match status" value="1"/>
</dbReference>
<dbReference type="PANTHER" id="PTHR30534:SF0">
    <property type="entry name" value="FLAGELLAR MOTOR SWITCH PROTEIN FLIG"/>
    <property type="match status" value="1"/>
</dbReference>
<dbReference type="Pfam" id="PF01706">
    <property type="entry name" value="FliG_C"/>
    <property type="match status" value="1"/>
</dbReference>
<dbReference type="Pfam" id="PF14841">
    <property type="entry name" value="FliG_M"/>
    <property type="match status" value="1"/>
</dbReference>
<dbReference type="Pfam" id="PF14842">
    <property type="entry name" value="FliG_N"/>
    <property type="match status" value="1"/>
</dbReference>
<dbReference type="PIRSF" id="PIRSF003161">
    <property type="entry name" value="FliG"/>
    <property type="match status" value="1"/>
</dbReference>
<dbReference type="PRINTS" id="PR00954">
    <property type="entry name" value="FLGMOTORFLIG"/>
</dbReference>
<dbReference type="SUPFAM" id="SSF48029">
    <property type="entry name" value="FliG"/>
    <property type="match status" value="2"/>
</dbReference>
<proteinExistence type="inferred from homology"/>
<protein>
    <recommendedName>
        <fullName>Flagellar motor switch protein FliG</fullName>
    </recommendedName>
</protein>
<feature type="chain" id="PRO_0000184092" description="Flagellar motor switch protein FliG">
    <location>
        <begin position="1"/>
        <end position="338"/>
    </location>
</feature>
<feature type="short sequence motif" description="Part of the EHPQR-motif">
    <location>
        <begin position="130"/>
        <end position="133"/>
    </location>
</feature>
<feature type="site" description="Part of the EHPQR-motif">
    <location>
        <position position="165"/>
    </location>
</feature>
<sequence length="338" mass="37007">MSENRLAAKLTKVDKAAILLLSLGETDAAQVLRHMGPKEVQRVGVAMASMRNVHREQVEQVMGEFVEVVGDQTSLGVGADGYIRKMLTQALGEDKANNLIDRILLGGSTSGLDSLKWMEPRAVADVIRYEHPQIQAIVVAYLDPDQAAEVLSHFDHKVRLDIVLRVSSLNTVQPSALKELNLILEKQFAGNSNATRTTMGGVKRAADIMNYLDSSIEGQLMDSIREVDEDLSGQIEDLMFVFDNLADVDDRGIQALLREVSSDVLVLALKGSDEAIREKVFKNMSKRAAELLRDDLEAKGPVRVSEVEGAQKEILTIARRMAESGDIVLGGKGGEEMI</sequence>
<accession>Q51464</accession>
<keyword id="KW-0975">Bacterial flagellum</keyword>
<keyword id="KW-0997">Cell inner membrane</keyword>
<keyword id="KW-1003">Cell membrane</keyword>
<keyword id="KW-0145">Chemotaxis</keyword>
<keyword id="KW-0283">Flagellar rotation</keyword>
<keyword id="KW-0472">Membrane</keyword>
<keyword id="KW-1185">Reference proteome</keyword>